<keyword id="KW-0997">Cell inner membrane</keyword>
<keyword id="KW-1003">Cell membrane</keyword>
<keyword id="KW-0249">Electron transport</keyword>
<keyword id="KW-0472">Membrane</keyword>
<keyword id="KW-1278">Translocase</keyword>
<keyword id="KW-0812">Transmembrane</keyword>
<keyword id="KW-1133">Transmembrane helix</keyword>
<keyword id="KW-0813">Transport</keyword>
<organism>
    <name type="scientific">Escherichia coli O17:K52:H18 (strain UMN026 / ExPEC)</name>
    <dbReference type="NCBI Taxonomy" id="585056"/>
    <lineage>
        <taxon>Bacteria</taxon>
        <taxon>Pseudomonadati</taxon>
        <taxon>Pseudomonadota</taxon>
        <taxon>Gammaproteobacteria</taxon>
        <taxon>Enterobacterales</taxon>
        <taxon>Enterobacteriaceae</taxon>
        <taxon>Escherichia</taxon>
    </lineage>
</organism>
<feature type="chain" id="PRO_1000125851" description="Ion-translocating oxidoreductase complex subunit E">
    <location>
        <begin position="1"/>
        <end position="231"/>
    </location>
</feature>
<feature type="transmembrane region" description="Helical" evidence="1">
    <location>
        <begin position="18"/>
        <end position="38"/>
    </location>
</feature>
<feature type="transmembrane region" description="Helical" evidence="1">
    <location>
        <begin position="39"/>
        <end position="59"/>
    </location>
</feature>
<feature type="transmembrane region" description="Helical" evidence="1">
    <location>
        <begin position="63"/>
        <end position="83"/>
    </location>
</feature>
<feature type="transmembrane region" description="Helical" evidence="1">
    <location>
        <begin position="86"/>
        <end position="106"/>
    </location>
</feature>
<feature type="transmembrane region" description="Helical" evidence="1">
    <location>
        <begin position="125"/>
        <end position="145"/>
    </location>
</feature>
<feature type="transmembrane region" description="Helical" evidence="1">
    <location>
        <begin position="182"/>
        <end position="202"/>
    </location>
</feature>
<protein>
    <recommendedName>
        <fullName evidence="1">Ion-translocating oxidoreductase complex subunit E</fullName>
        <ecNumber evidence="1">7.-.-.-</ecNumber>
    </recommendedName>
    <alternativeName>
        <fullName evidence="1">Rsx electron transport complex subunit E</fullName>
    </alternativeName>
</protein>
<accession>B7NB86</accession>
<name>RSXE_ECOLU</name>
<proteinExistence type="inferred from homology"/>
<comment type="function">
    <text evidence="1">Part of a membrane-bound complex that couples electron transfer with translocation of ions across the membrane. Required to maintain the reduced state of SoxR.</text>
</comment>
<comment type="subunit">
    <text evidence="1">The complex is composed of six subunits: RsxA, RsxB, RsxC, RsxD, RsxE and RsxG.</text>
</comment>
<comment type="subcellular location">
    <subcellularLocation>
        <location evidence="1">Cell inner membrane</location>
        <topology evidence="1">Multi-pass membrane protein</topology>
    </subcellularLocation>
</comment>
<comment type="similarity">
    <text evidence="1">Belongs to the NqrDE/RnfAE family.</text>
</comment>
<gene>
    <name evidence="1" type="primary">rsxE</name>
    <name type="ordered locus">ECUMN_1923</name>
</gene>
<dbReference type="EC" id="7.-.-.-" evidence="1"/>
<dbReference type="EMBL" id="CU928163">
    <property type="protein sequence ID" value="CAR13120.1"/>
    <property type="molecule type" value="Genomic_DNA"/>
</dbReference>
<dbReference type="RefSeq" id="WP_001289652.1">
    <property type="nucleotide sequence ID" value="NC_011751.1"/>
</dbReference>
<dbReference type="RefSeq" id="YP_002412652.1">
    <property type="nucleotide sequence ID" value="NC_011751.1"/>
</dbReference>
<dbReference type="SMR" id="B7NB86"/>
<dbReference type="STRING" id="585056.ECUMN_1923"/>
<dbReference type="KEGG" id="eum:ECUMN_1923"/>
<dbReference type="PATRIC" id="fig|585056.7.peg.2106"/>
<dbReference type="HOGENOM" id="CLU_046659_1_0_6"/>
<dbReference type="Proteomes" id="UP000007097">
    <property type="component" value="Chromosome"/>
</dbReference>
<dbReference type="GO" id="GO:0005886">
    <property type="term" value="C:plasma membrane"/>
    <property type="evidence" value="ECO:0007669"/>
    <property type="project" value="UniProtKB-SubCell"/>
</dbReference>
<dbReference type="GO" id="GO:0022900">
    <property type="term" value="P:electron transport chain"/>
    <property type="evidence" value="ECO:0007669"/>
    <property type="project" value="UniProtKB-UniRule"/>
</dbReference>
<dbReference type="HAMAP" id="MF_00478">
    <property type="entry name" value="RsxE_RnfE"/>
    <property type="match status" value="1"/>
</dbReference>
<dbReference type="InterPro" id="IPR003667">
    <property type="entry name" value="NqrDE/RnfAE"/>
</dbReference>
<dbReference type="InterPro" id="IPR010968">
    <property type="entry name" value="RnfE"/>
</dbReference>
<dbReference type="NCBIfam" id="NF009070">
    <property type="entry name" value="PRK12405.1"/>
    <property type="match status" value="1"/>
</dbReference>
<dbReference type="NCBIfam" id="TIGR01948">
    <property type="entry name" value="rnfE"/>
    <property type="match status" value="1"/>
</dbReference>
<dbReference type="PANTHER" id="PTHR30586">
    <property type="entry name" value="ELECTRON TRANSPORT COMPLEX PROTEIN RNFE"/>
    <property type="match status" value="1"/>
</dbReference>
<dbReference type="PANTHER" id="PTHR30586:SF0">
    <property type="entry name" value="ION-TRANSLOCATING OXIDOREDUCTASE COMPLEX SUBUNIT E"/>
    <property type="match status" value="1"/>
</dbReference>
<dbReference type="Pfam" id="PF02508">
    <property type="entry name" value="Rnf-Nqr"/>
    <property type="match status" value="1"/>
</dbReference>
<dbReference type="PIRSF" id="PIRSF006102">
    <property type="entry name" value="NQR_DE"/>
    <property type="match status" value="1"/>
</dbReference>
<evidence type="ECO:0000255" key="1">
    <source>
        <dbReference type="HAMAP-Rule" id="MF_00478"/>
    </source>
</evidence>
<sequence length="231" mass="24459">MSEIKDVIVQGLWKNNSALVQLLGLCPLLAVTSTATNALGLGLATTLVLTLTNLTISTLRHWTPAEIRIPIYVMIIASVVSAVQMLINAYAFGLYQSLGIFIPLIVTNCIVVGRAEAFAAKKGPALSALDGFSIGMGATCAMFVLGSLREIIGNGTLFDGADALLGSWAKVLRVEIFHTDSPFLLAMLPPGAFIGLGLMLAGKYLIDERMKKRRAEAAAERALPNGETGNV</sequence>
<reference key="1">
    <citation type="journal article" date="2009" name="PLoS Genet.">
        <title>Organised genome dynamics in the Escherichia coli species results in highly diverse adaptive paths.</title>
        <authorList>
            <person name="Touchon M."/>
            <person name="Hoede C."/>
            <person name="Tenaillon O."/>
            <person name="Barbe V."/>
            <person name="Baeriswyl S."/>
            <person name="Bidet P."/>
            <person name="Bingen E."/>
            <person name="Bonacorsi S."/>
            <person name="Bouchier C."/>
            <person name="Bouvet O."/>
            <person name="Calteau A."/>
            <person name="Chiapello H."/>
            <person name="Clermont O."/>
            <person name="Cruveiller S."/>
            <person name="Danchin A."/>
            <person name="Diard M."/>
            <person name="Dossat C."/>
            <person name="Karoui M.E."/>
            <person name="Frapy E."/>
            <person name="Garry L."/>
            <person name="Ghigo J.M."/>
            <person name="Gilles A.M."/>
            <person name="Johnson J."/>
            <person name="Le Bouguenec C."/>
            <person name="Lescat M."/>
            <person name="Mangenot S."/>
            <person name="Martinez-Jehanne V."/>
            <person name="Matic I."/>
            <person name="Nassif X."/>
            <person name="Oztas S."/>
            <person name="Petit M.A."/>
            <person name="Pichon C."/>
            <person name="Rouy Z."/>
            <person name="Ruf C.S."/>
            <person name="Schneider D."/>
            <person name="Tourret J."/>
            <person name="Vacherie B."/>
            <person name="Vallenet D."/>
            <person name="Medigue C."/>
            <person name="Rocha E.P.C."/>
            <person name="Denamur E."/>
        </authorList>
    </citation>
    <scope>NUCLEOTIDE SEQUENCE [LARGE SCALE GENOMIC DNA]</scope>
    <source>
        <strain>UMN026 / ExPEC</strain>
    </source>
</reference>